<gene>
    <name type="primary">rps12-A</name>
    <name type="ordered locus">MoinCp045</name>
</gene>
<gene>
    <name type="primary">rps12-B</name>
    <name type="ordered locus">MoinCp085</name>
</gene>
<proteinExistence type="inferred from homology"/>
<comment type="function">
    <text evidence="1">With S4 and S5 plays an important role in translational accuracy. Located at the interface of the 30S and 50S subunits (By similarity).</text>
</comment>
<comment type="subunit">
    <text evidence="1">Part of the 30S ribosomal subunit.</text>
</comment>
<comment type="subcellular location">
    <subcellularLocation>
        <location>Plastid</location>
        <location>Chloroplast</location>
    </subcellularLocation>
</comment>
<comment type="similarity">
    <text evidence="3">Belongs to the universal ribosomal protein uS12 family.</text>
</comment>
<protein>
    <recommendedName>
        <fullName evidence="2">Small ribosomal subunit protein uS12cz/uS12cy</fullName>
    </recommendedName>
    <alternativeName>
        <fullName evidence="3">30S ribosomal protein S12, chloroplastic</fullName>
    </alternativeName>
</protein>
<geneLocation type="chloroplast"/>
<sequence>MPTIKQLIRNTRQPIKNVTKSPALRGCPQRRGTCTRVYTITPKKPNSALRKVARVRLTSGFEITAYIPGIGHNLQEHSVVLVRGGRVKDLPGVRYHIVRGTLDAVGVKDRQQGRSKYGVKKPK</sequence>
<accession>Q09WZ3</accession>
<dbReference type="EMBL" id="DQ226511">
    <property type="protein sequence ID" value="ABB20980.1"/>
    <property type="molecule type" value="Genomic_DNA"/>
</dbReference>
<dbReference type="EMBL" id="DQ226511">
    <property type="protein sequence ID" value="ABB20981.1"/>
    <property type="molecule type" value="Genomic_DNA"/>
</dbReference>
<dbReference type="SMR" id="Q09WZ3"/>
<dbReference type="GO" id="GO:0009507">
    <property type="term" value="C:chloroplast"/>
    <property type="evidence" value="ECO:0007669"/>
    <property type="project" value="UniProtKB-SubCell"/>
</dbReference>
<dbReference type="GO" id="GO:0015935">
    <property type="term" value="C:small ribosomal subunit"/>
    <property type="evidence" value="ECO:0007669"/>
    <property type="project" value="InterPro"/>
</dbReference>
<dbReference type="GO" id="GO:0019843">
    <property type="term" value="F:rRNA binding"/>
    <property type="evidence" value="ECO:0007669"/>
    <property type="project" value="UniProtKB-UniRule"/>
</dbReference>
<dbReference type="GO" id="GO:0003735">
    <property type="term" value="F:structural constituent of ribosome"/>
    <property type="evidence" value="ECO:0007669"/>
    <property type="project" value="InterPro"/>
</dbReference>
<dbReference type="GO" id="GO:0006412">
    <property type="term" value="P:translation"/>
    <property type="evidence" value="ECO:0007669"/>
    <property type="project" value="UniProtKB-UniRule"/>
</dbReference>
<dbReference type="CDD" id="cd03368">
    <property type="entry name" value="Ribosomal_S12"/>
    <property type="match status" value="1"/>
</dbReference>
<dbReference type="FunFam" id="2.40.50.140:FF:000008">
    <property type="entry name" value="30S ribosomal protein S12, chloroplastic"/>
    <property type="match status" value="1"/>
</dbReference>
<dbReference type="Gene3D" id="2.40.50.140">
    <property type="entry name" value="Nucleic acid-binding proteins"/>
    <property type="match status" value="1"/>
</dbReference>
<dbReference type="HAMAP" id="MF_00403_B">
    <property type="entry name" value="Ribosomal_uS12_B"/>
    <property type="match status" value="1"/>
</dbReference>
<dbReference type="InterPro" id="IPR012340">
    <property type="entry name" value="NA-bd_OB-fold"/>
</dbReference>
<dbReference type="InterPro" id="IPR006032">
    <property type="entry name" value="Ribosomal_uS12"/>
</dbReference>
<dbReference type="InterPro" id="IPR005679">
    <property type="entry name" value="Ribosomal_uS12_bac"/>
</dbReference>
<dbReference type="NCBIfam" id="TIGR00981">
    <property type="entry name" value="rpsL_bact"/>
    <property type="match status" value="1"/>
</dbReference>
<dbReference type="PANTHER" id="PTHR11652">
    <property type="entry name" value="30S RIBOSOMAL PROTEIN S12 FAMILY MEMBER"/>
    <property type="match status" value="1"/>
</dbReference>
<dbReference type="Pfam" id="PF00164">
    <property type="entry name" value="Ribosom_S12_S23"/>
    <property type="match status" value="1"/>
</dbReference>
<dbReference type="PIRSF" id="PIRSF002133">
    <property type="entry name" value="Ribosomal_S12/S23"/>
    <property type="match status" value="1"/>
</dbReference>
<dbReference type="PRINTS" id="PR01034">
    <property type="entry name" value="RIBOSOMALS12"/>
</dbReference>
<dbReference type="SUPFAM" id="SSF50249">
    <property type="entry name" value="Nucleic acid-binding proteins"/>
    <property type="match status" value="1"/>
</dbReference>
<dbReference type="PROSITE" id="PS00055">
    <property type="entry name" value="RIBOSOMAL_S12"/>
    <property type="match status" value="1"/>
</dbReference>
<organism>
    <name type="scientific">Morus indica</name>
    <name type="common">Mulberry</name>
    <dbReference type="NCBI Taxonomy" id="248361"/>
    <lineage>
        <taxon>Eukaryota</taxon>
        <taxon>Viridiplantae</taxon>
        <taxon>Streptophyta</taxon>
        <taxon>Embryophyta</taxon>
        <taxon>Tracheophyta</taxon>
        <taxon>Spermatophyta</taxon>
        <taxon>Magnoliopsida</taxon>
        <taxon>eudicotyledons</taxon>
        <taxon>Gunneridae</taxon>
        <taxon>Pentapetalae</taxon>
        <taxon>rosids</taxon>
        <taxon>fabids</taxon>
        <taxon>Rosales</taxon>
        <taxon>Moraceae</taxon>
        <taxon>Moreae</taxon>
        <taxon>Morus</taxon>
    </lineage>
</organism>
<evidence type="ECO:0000250" key="1"/>
<evidence type="ECO:0000255" key="2">
    <source>
        <dbReference type="HAMAP-Rule" id="MF_00403"/>
    </source>
</evidence>
<evidence type="ECO:0000305" key="3"/>
<reference key="1">
    <citation type="submission" date="2005-09" db="EMBL/GenBank/DDBJ databases">
        <title>The chloroplast genome of mulberry: structural features and comparative analysis.</title>
        <authorList>
            <person name="Ravi V."/>
            <person name="Khurana J.P."/>
            <person name="Tyagi A.K."/>
            <person name="Khurana P."/>
        </authorList>
    </citation>
    <scope>NUCLEOTIDE SEQUENCE [LARGE SCALE GENOMIC DNA]</scope>
    <source>
        <strain>cv. K2</strain>
    </source>
</reference>
<name>RR12_MORIN</name>
<keyword id="KW-0150">Chloroplast</keyword>
<keyword id="KW-0934">Plastid</keyword>
<keyword id="KW-0687">Ribonucleoprotein</keyword>
<keyword id="KW-0689">Ribosomal protein</keyword>
<keyword id="KW-0694">RNA-binding</keyword>
<keyword id="KW-0699">rRNA-binding</keyword>
<feature type="chain" id="PRO_0000276618" description="Small ribosomal subunit protein uS12cz/uS12cy">
    <location>
        <begin position="1"/>
        <end position="123"/>
    </location>
</feature>